<keyword id="KW-0963">Cytoplasm</keyword>
<keyword id="KW-0648">Protein biosynthesis</keyword>
<keyword id="KW-0663">Pyridoxal phosphate</keyword>
<keyword id="KW-1185">Reference proteome</keyword>
<keyword id="KW-0711">Selenium</keyword>
<keyword id="KW-0808">Transferase</keyword>
<comment type="function">
    <text evidence="1">Converts seryl-tRNA(Sec) to selenocysteinyl-tRNA(Sec) required for selenoprotein biosynthesis.</text>
</comment>
<comment type="catalytic activity">
    <reaction evidence="1">
        <text>L-seryl-tRNA(Sec) + selenophosphate + H(+) = L-selenocysteinyl-tRNA(Sec) + phosphate</text>
        <dbReference type="Rhea" id="RHEA:22728"/>
        <dbReference type="Rhea" id="RHEA-COMP:9742"/>
        <dbReference type="Rhea" id="RHEA-COMP:9743"/>
        <dbReference type="ChEBI" id="CHEBI:15378"/>
        <dbReference type="ChEBI" id="CHEBI:16144"/>
        <dbReference type="ChEBI" id="CHEBI:43474"/>
        <dbReference type="ChEBI" id="CHEBI:78533"/>
        <dbReference type="ChEBI" id="CHEBI:78573"/>
        <dbReference type="EC" id="2.9.1.1"/>
    </reaction>
</comment>
<comment type="cofactor">
    <cofactor evidence="1">
        <name>pyridoxal 5'-phosphate</name>
        <dbReference type="ChEBI" id="CHEBI:597326"/>
    </cofactor>
</comment>
<comment type="pathway">
    <text evidence="1">Aminoacyl-tRNA biosynthesis; selenocysteinyl-tRNA(Sec) biosynthesis; selenocysteinyl-tRNA(Sec) from L-seryl-tRNA(Sec) (bacterial route): step 1/1.</text>
</comment>
<comment type="subunit">
    <text evidence="1">Homodecamer; pentamer of dimers. Binds only one seryl-tRNA(Sec) per dimer.</text>
</comment>
<comment type="subcellular location">
    <subcellularLocation>
        <location evidence="1">Cytoplasm</location>
    </subcellularLocation>
</comment>
<comment type="similarity">
    <text evidence="1">Belongs to the SelA family.</text>
</comment>
<feature type="chain" id="PRO_1000124147" description="L-seryl-tRNA(Sec) selenium transferase">
    <location>
        <begin position="1"/>
        <end position="463"/>
    </location>
</feature>
<feature type="modified residue" description="N6-(pyridoxal phosphate)lysine" evidence="1">
    <location>
        <position position="295"/>
    </location>
</feature>
<accession>B4F0S0</accession>
<gene>
    <name evidence="1" type="primary">selA</name>
    <name type="ordered locus">PMI3106</name>
</gene>
<dbReference type="EC" id="2.9.1.1" evidence="1"/>
<dbReference type="EMBL" id="AM942759">
    <property type="protein sequence ID" value="CAR46105.1"/>
    <property type="molecule type" value="Genomic_DNA"/>
</dbReference>
<dbReference type="RefSeq" id="WP_012368627.1">
    <property type="nucleotide sequence ID" value="NC_010554.1"/>
</dbReference>
<dbReference type="SMR" id="B4F0S0"/>
<dbReference type="EnsemblBacteria" id="CAR46105">
    <property type="protein sequence ID" value="CAR46105"/>
    <property type="gene ID" value="PMI3106"/>
</dbReference>
<dbReference type="GeneID" id="6801749"/>
<dbReference type="KEGG" id="pmr:PMI3106"/>
<dbReference type="PATRIC" id="fig|529507.6.peg.3035"/>
<dbReference type="eggNOG" id="COG1921">
    <property type="taxonomic scope" value="Bacteria"/>
</dbReference>
<dbReference type="HOGENOM" id="CLU_038142_1_0_6"/>
<dbReference type="UniPathway" id="UPA00906">
    <property type="reaction ID" value="UER00896"/>
</dbReference>
<dbReference type="Proteomes" id="UP000008319">
    <property type="component" value="Chromosome"/>
</dbReference>
<dbReference type="GO" id="GO:0005737">
    <property type="term" value="C:cytoplasm"/>
    <property type="evidence" value="ECO:0007669"/>
    <property type="project" value="UniProtKB-SubCell"/>
</dbReference>
<dbReference type="GO" id="GO:0004125">
    <property type="term" value="F:L-seryl-tRNA(Sec) selenium transferase activity"/>
    <property type="evidence" value="ECO:0007669"/>
    <property type="project" value="UniProtKB-UniRule"/>
</dbReference>
<dbReference type="GO" id="GO:0001717">
    <property type="term" value="P:conversion of seryl-tRNAsec to selenocys-tRNAsec"/>
    <property type="evidence" value="ECO:0007669"/>
    <property type="project" value="UniProtKB-UniRule"/>
</dbReference>
<dbReference type="GO" id="GO:0001514">
    <property type="term" value="P:selenocysteine incorporation"/>
    <property type="evidence" value="ECO:0007669"/>
    <property type="project" value="UniProtKB-UniRule"/>
</dbReference>
<dbReference type="FunFam" id="3.40.640.10:FF:000028">
    <property type="entry name" value="L-seryl-tRNA(Sec) selenium transferase"/>
    <property type="match status" value="1"/>
</dbReference>
<dbReference type="Gene3D" id="3.90.1150.180">
    <property type="match status" value="1"/>
</dbReference>
<dbReference type="Gene3D" id="3.40.640.10">
    <property type="entry name" value="Type I PLP-dependent aspartate aminotransferase-like (Major domain)"/>
    <property type="match status" value="1"/>
</dbReference>
<dbReference type="HAMAP" id="MF_00423">
    <property type="entry name" value="SelA"/>
    <property type="match status" value="1"/>
</dbReference>
<dbReference type="InterPro" id="IPR015424">
    <property type="entry name" value="PyrdxlP-dep_Trfase"/>
</dbReference>
<dbReference type="InterPro" id="IPR015421">
    <property type="entry name" value="PyrdxlP-dep_Trfase_major"/>
</dbReference>
<dbReference type="InterPro" id="IPR018319">
    <property type="entry name" value="SelA-like"/>
</dbReference>
<dbReference type="InterPro" id="IPR004534">
    <property type="entry name" value="SelA_trans"/>
</dbReference>
<dbReference type="InterPro" id="IPR025862">
    <property type="entry name" value="SelA_trans_N_dom"/>
</dbReference>
<dbReference type="NCBIfam" id="TIGR00474">
    <property type="entry name" value="selA"/>
    <property type="match status" value="1"/>
</dbReference>
<dbReference type="PANTHER" id="PTHR32328">
    <property type="entry name" value="L-SERYL-TRNA(SEC) SELENIUM TRANSFERASE"/>
    <property type="match status" value="1"/>
</dbReference>
<dbReference type="PANTHER" id="PTHR32328:SF0">
    <property type="entry name" value="L-SERYL-TRNA(SEC) SELENIUM TRANSFERASE"/>
    <property type="match status" value="1"/>
</dbReference>
<dbReference type="Pfam" id="PF12390">
    <property type="entry name" value="Se-cys_synth_N"/>
    <property type="match status" value="1"/>
</dbReference>
<dbReference type="Pfam" id="PF03841">
    <property type="entry name" value="SelA"/>
    <property type="match status" value="1"/>
</dbReference>
<dbReference type="SUPFAM" id="SSF53383">
    <property type="entry name" value="PLP-dependent transferases"/>
    <property type="match status" value="1"/>
</dbReference>
<reference key="1">
    <citation type="journal article" date="2008" name="J. Bacteriol.">
        <title>Complete genome sequence of uropathogenic Proteus mirabilis, a master of both adherence and motility.</title>
        <authorList>
            <person name="Pearson M.M."/>
            <person name="Sebaihia M."/>
            <person name="Churcher C."/>
            <person name="Quail M.A."/>
            <person name="Seshasayee A.S."/>
            <person name="Luscombe N.M."/>
            <person name="Abdellah Z."/>
            <person name="Arrosmith C."/>
            <person name="Atkin B."/>
            <person name="Chillingworth T."/>
            <person name="Hauser H."/>
            <person name="Jagels K."/>
            <person name="Moule S."/>
            <person name="Mungall K."/>
            <person name="Norbertczak H."/>
            <person name="Rabbinowitsch E."/>
            <person name="Walker D."/>
            <person name="Whithead S."/>
            <person name="Thomson N.R."/>
            <person name="Rather P.N."/>
            <person name="Parkhill J."/>
            <person name="Mobley H.L.T."/>
        </authorList>
    </citation>
    <scope>NUCLEOTIDE SEQUENCE [LARGE SCALE GENOMIC DNA]</scope>
    <source>
        <strain>HI4320</strain>
    </source>
</reference>
<protein>
    <recommendedName>
        <fullName evidence="1">L-seryl-tRNA(Sec) selenium transferase</fullName>
        <ecNumber evidence="1">2.9.1.1</ecNumber>
    </recommendedName>
    <alternativeName>
        <fullName evidence="1">Selenocysteine synthase</fullName>
        <shortName evidence="1">Sec synthase</shortName>
    </alternativeName>
    <alternativeName>
        <fullName evidence="1">Selenocysteinyl-tRNA(Sec) synthase</fullName>
    </alternativeName>
</protein>
<sequence>MTHDTRSLYSQLSSIDSLLHQADIQTLVDGYGQTFIVEHLRKLQEEARIIIRQNNQLPQWHDNWAEELKNRIALQRKAAIKPVFNLTGTVLHTNLGRALMAESAIEAVSQVMRSPATLEYSLDGASRGHRDRAIADLLCELTGAEDACIVNNNAAAVLLMLATVAPDKEVVVSRGELVEIGGAFRIPDVMCQAGCRLKEVGTTNRTHLKDYRNAINENTGLLMKVHTSNYSIQGFTAEVEGTQLAALGKEMNLPTAIDLGSGSMTNLAALGLPSEPMPQDYLQQGIDLVTFSGDKLLGGPQAGIILGKKAWIEAIQHHPLKRALRVDKMTLAALDATLRLYQQPEKMIKDIPTLRLLTRTQTEIHDMAQRLLPHFQAYYGDNYHITISSCASQIGSGSLPIESLPSAALTFAAKDGKGSQLDALAAHWRNLEKPIIGRITDGRLWLDLRCLEDENALIQALSL</sequence>
<proteinExistence type="inferred from homology"/>
<name>SELA_PROMH</name>
<organism>
    <name type="scientific">Proteus mirabilis (strain HI4320)</name>
    <dbReference type="NCBI Taxonomy" id="529507"/>
    <lineage>
        <taxon>Bacteria</taxon>
        <taxon>Pseudomonadati</taxon>
        <taxon>Pseudomonadota</taxon>
        <taxon>Gammaproteobacteria</taxon>
        <taxon>Enterobacterales</taxon>
        <taxon>Morganellaceae</taxon>
        <taxon>Proteus</taxon>
    </lineage>
</organism>
<evidence type="ECO:0000255" key="1">
    <source>
        <dbReference type="HAMAP-Rule" id="MF_00423"/>
    </source>
</evidence>